<protein>
    <recommendedName>
        <fullName evidence="1">A-type ATP synthase subunit F</fullName>
    </recommendedName>
</protein>
<comment type="function">
    <text evidence="1">Component of the A-type ATP synthase that produces ATP from ADP in the presence of a proton gradient across the membrane.</text>
</comment>
<comment type="subunit">
    <text evidence="1">Has multiple subunits with at least A(3), B(3), C, D, E, F, H, I and proteolipid K(x).</text>
</comment>
<comment type="subcellular location">
    <subcellularLocation>
        <location evidence="1">Cell membrane</location>
        <topology evidence="1">Peripheral membrane protein</topology>
    </subcellularLocation>
</comment>
<comment type="similarity">
    <text evidence="1">Belongs to the V-ATPase F subunit family.</text>
</comment>
<organism>
    <name type="scientific">Thermoplasma acidophilum (strain ATCC 25905 / DSM 1728 / JCM 9062 / NBRC 15155 / AMRC-C165)</name>
    <dbReference type="NCBI Taxonomy" id="273075"/>
    <lineage>
        <taxon>Archaea</taxon>
        <taxon>Methanobacteriati</taxon>
        <taxon>Thermoplasmatota</taxon>
        <taxon>Thermoplasmata</taxon>
        <taxon>Thermoplasmatales</taxon>
        <taxon>Thermoplasmataceae</taxon>
        <taxon>Thermoplasma</taxon>
    </lineage>
</organism>
<accession>Q9HM66</accession>
<dbReference type="EMBL" id="AL445063">
    <property type="protein sequence ID" value="CAC11152.1"/>
    <property type="molecule type" value="Genomic_DNA"/>
</dbReference>
<dbReference type="RefSeq" id="WP_010900430.1">
    <property type="nucleotide sequence ID" value="NC_002578.1"/>
</dbReference>
<dbReference type="SMR" id="Q9HM66"/>
<dbReference type="STRING" id="273075.gene:9571218"/>
<dbReference type="PaxDb" id="273075-Ta0003"/>
<dbReference type="DNASU" id="1455675"/>
<dbReference type="EnsemblBacteria" id="CAC11152">
    <property type="protein sequence ID" value="CAC11152"/>
    <property type="gene ID" value="CAC11152"/>
</dbReference>
<dbReference type="KEGG" id="tac:Ta0003"/>
<dbReference type="eggNOG" id="arCOG04102">
    <property type="taxonomic scope" value="Archaea"/>
</dbReference>
<dbReference type="HOGENOM" id="CLU_2313886_0_0_2"/>
<dbReference type="InParanoid" id="Q9HM66"/>
<dbReference type="OrthoDB" id="24971at2157"/>
<dbReference type="Proteomes" id="UP000001024">
    <property type="component" value="Chromosome"/>
</dbReference>
<dbReference type="GO" id="GO:0005886">
    <property type="term" value="C:plasma membrane"/>
    <property type="evidence" value="ECO:0007669"/>
    <property type="project" value="UniProtKB-SubCell"/>
</dbReference>
<dbReference type="GO" id="GO:0005524">
    <property type="term" value="F:ATP binding"/>
    <property type="evidence" value="ECO:0007669"/>
    <property type="project" value="UniProtKB-UniRule"/>
</dbReference>
<dbReference type="GO" id="GO:0046933">
    <property type="term" value="F:proton-transporting ATP synthase activity, rotational mechanism"/>
    <property type="evidence" value="ECO:0007669"/>
    <property type="project" value="UniProtKB-UniRule"/>
</dbReference>
<dbReference type="GO" id="GO:0046961">
    <property type="term" value="F:proton-transporting ATPase activity, rotational mechanism"/>
    <property type="evidence" value="ECO:0007669"/>
    <property type="project" value="InterPro"/>
</dbReference>
<dbReference type="GO" id="GO:0042777">
    <property type="term" value="P:proton motive force-driven plasma membrane ATP synthesis"/>
    <property type="evidence" value="ECO:0007669"/>
    <property type="project" value="UniProtKB-UniRule"/>
</dbReference>
<dbReference type="Gene3D" id="3.40.50.10580">
    <property type="entry name" value="ATPase, V1 complex, subunit F"/>
    <property type="match status" value="1"/>
</dbReference>
<dbReference type="HAMAP" id="MF_00312">
    <property type="entry name" value="ATP_synth_F_arch"/>
    <property type="match status" value="1"/>
</dbReference>
<dbReference type="InterPro" id="IPR008218">
    <property type="entry name" value="ATPase_V1-cplx_f_g_su"/>
</dbReference>
<dbReference type="InterPro" id="IPR022944">
    <property type="entry name" value="ATPase_V1-cplx_fsu_bac/arc"/>
</dbReference>
<dbReference type="InterPro" id="IPR036906">
    <property type="entry name" value="ATPase_V1_fsu_sf"/>
</dbReference>
<dbReference type="NCBIfam" id="NF002256">
    <property type="entry name" value="PRK01189.1"/>
    <property type="match status" value="1"/>
</dbReference>
<dbReference type="Pfam" id="PF01990">
    <property type="entry name" value="ATP-synt_F"/>
    <property type="match status" value="1"/>
</dbReference>
<dbReference type="SUPFAM" id="SSF159468">
    <property type="entry name" value="AtpF-like"/>
    <property type="match status" value="1"/>
</dbReference>
<feature type="chain" id="PRO_0000144825" description="A-type ATP synthase subunit F">
    <location>
        <begin position="1"/>
        <end position="104"/>
    </location>
</feature>
<name>AATF_THEAC</name>
<sequence length="104" mass="11721">MESCITVIGERDVVLGFRLLGIQHTIIAEGKDLLKKFLEVFQNPQCNIIIVSENVKNMMDKRTLRSVEISSKPLVVFIPLPGVREEETIEEMAKRILGIDIGNV</sequence>
<gene>
    <name evidence="1" type="primary">atpF</name>
    <name type="ordered locus">Ta0003</name>
</gene>
<evidence type="ECO:0000255" key="1">
    <source>
        <dbReference type="HAMAP-Rule" id="MF_00312"/>
    </source>
</evidence>
<reference key="1">
    <citation type="journal article" date="2000" name="Nature">
        <title>The genome sequence of the thermoacidophilic scavenger Thermoplasma acidophilum.</title>
        <authorList>
            <person name="Ruepp A."/>
            <person name="Graml W."/>
            <person name="Santos-Martinez M.-L."/>
            <person name="Koretke K.K."/>
            <person name="Volker C."/>
            <person name="Mewes H.-W."/>
            <person name="Frishman D."/>
            <person name="Stocker S."/>
            <person name="Lupas A.N."/>
            <person name="Baumeister W."/>
        </authorList>
    </citation>
    <scope>NUCLEOTIDE SEQUENCE [LARGE SCALE GENOMIC DNA]</scope>
    <source>
        <strain>ATCC 25905 / DSM 1728 / JCM 9062 / NBRC 15155 / AMRC-C165</strain>
    </source>
</reference>
<proteinExistence type="inferred from homology"/>
<keyword id="KW-0066">ATP synthesis</keyword>
<keyword id="KW-1003">Cell membrane</keyword>
<keyword id="KW-0375">Hydrogen ion transport</keyword>
<keyword id="KW-0406">Ion transport</keyword>
<keyword id="KW-0472">Membrane</keyword>
<keyword id="KW-1185">Reference proteome</keyword>
<keyword id="KW-0813">Transport</keyword>